<gene>
    <name evidence="1" type="primary">katG1</name>
    <name type="ordered locus">BamMC406_0642</name>
</gene>
<accession>B1YTH4</accession>
<reference key="1">
    <citation type="submission" date="2008-04" db="EMBL/GenBank/DDBJ databases">
        <title>Complete sequence of chromosome 1 of Burkholderia ambifaria MC40-6.</title>
        <authorList>
            <person name="Copeland A."/>
            <person name="Lucas S."/>
            <person name="Lapidus A."/>
            <person name="Glavina del Rio T."/>
            <person name="Dalin E."/>
            <person name="Tice H."/>
            <person name="Pitluck S."/>
            <person name="Chain P."/>
            <person name="Malfatti S."/>
            <person name="Shin M."/>
            <person name="Vergez L."/>
            <person name="Lang D."/>
            <person name="Schmutz J."/>
            <person name="Larimer F."/>
            <person name="Land M."/>
            <person name="Hauser L."/>
            <person name="Kyrpides N."/>
            <person name="Lykidis A."/>
            <person name="Ramette A."/>
            <person name="Konstantinidis K."/>
            <person name="Tiedje J."/>
            <person name="Richardson P."/>
        </authorList>
    </citation>
    <scope>NUCLEOTIDE SEQUENCE [LARGE SCALE GENOMIC DNA]</scope>
    <source>
        <strain>MC40-6</strain>
    </source>
</reference>
<name>KATG1_BURA4</name>
<proteinExistence type="inferred from homology"/>
<sequence>MSTESKCPFNHTAAGGTSNKDWWPNQLNLNILHRHSALSDPMDKDFDYAQAFKKLDLAAVKRDLQALMTTSQDWWPADFGHYGGLFVRMAWHSAGTYRTADGRGGAGGGQQRFAPLNSWPDNANLDKARRLLWPIKQKYGRNISWADLLILTGNVALESMGFKTFGYAGGRADTWEPDDVYWGSEKIWLELSGGPNSRYSGDRELENPLAAVQMGLIYVNPEGPDGNPDPVAAARDIRDTFARMAMNDEETVALIAGGHTFGKTHGAGPATDVGPEPEAAGIEQQGLGWKSAYASGKGHDAITSGLEVTWTSTPTKWSHDFFKHLFSYEWELTKSPAGAHQWVAKGADEVIPDAFDASKKHRPTMLTTDLSLRFDPAYEKISRRFYENPAEFADAFARAWFKLTHRDMGPRARYLGPEVPAEELLWQDPIPVVDHPLIDDADVAALKAKVLASGLSVAQLVSTAWASASTFRGSDKRGGANGARIRLAPQKDWEVNQPAALAAVLETLEGVRKAFNDAQTGGKKVSLADLIVLAGAAGIEQAAKNAGVAVTVPFAPGRMDASQEQTDVDAMAVLEPVADGFRNYLKSAYKTPAEALLVDKAQLLTLNGPELTVLVGGLRVLGANVGDAKHGVFTDRPGTLSNDFFVNLLDMGTEWKPVSAANDVFEGRDRATGLVKWTGTRVDLIFGSHSQLRALAEVYGSADANEKFVRDFVAAWDKVMNLDRFDLA</sequence>
<protein>
    <recommendedName>
        <fullName evidence="1">Catalase-peroxidase 1</fullName>
        <shortName evidence="1">CP 1</shortName>
        <ecNumber evidence="1">1.11.1.21</ecNumber>
    </recommendedName>
    <alternativeName>
        <fullName evidence="1">Peroxidase/catalase 1</fullName>
    </alternativeName>
</protein>
<keyword id="KW-0349">Heme</keyword>
<keyword id="KW-0376">Hydrogen peroxide</keyword>
<keyword id="KW-0408">Iron</keyword>
<keyword id="KW-0479">Metal-binding</keyword>
<keyword id="KW-0560">Oxidoreductase</keyword>
<keyword id="KW-0575">Peroxidase</keyword>
<organism>
    <name type="scientific">Burkholderia ambifaria (strain MC40-6)</name>
    <dbReference type="NCBI Taxonomy" id="398577"/>
    <lineage>
        <taxon>Bacteria</taxon>
        <taxon>Pseudomonadati</taxon>
        <taxon>Pseudomonadota</taxon>
        <taxon>Betaproteobacteria</taxon>
        <taxon>Burkholderiales</taxon>
        <taxon>Burkholderiaceae</taxon>
        <taxon>Burkholderia</taxon>
        <taxon>Burkholderia cepacia complex</taxon>
    </lineage>
</organism>
<evidence type="ECO:0000255" key="1">
    <source>
        <dbReference type="HAMAP-Rule" id="MF_01961"/>
    </source>
</evidence>
<dbReference type="EC" id="1.11.1.21" evidence="1"/>
<dbReference type="EMBL" id="CP001025">
    <property type="protein sequence ID" value="ACB63139.1"/>
    <property type="molecule type" value="Genomic_DNA"/>
</dbReference>
<dbReference type="RefSeq" id="WP_012363134.1">
    <property type="nucleotide sequence ID" value="NC_010551.1"/>
</dbReference>
<dbReference type="SMR" id="B1YTH4"/>
<dbReference type="KEGG" id="bac:BamMC406_0642"/>
<dbReference type="HOGENOM" id="CLU_025424_2_0_4"/>
<dbReference type="OrthoDB" id="9759743at2"/>
<dbReference type="Proteomes" id="UP000001680">
    <property type="component" value="Chromosome 1"/>
</dbReference>
<dbReference type="GO" id="GO:0005829">
    <property type="term" value="C:cytosol"/>
    <property type="evidence" value="ECO:0007669"/>
    <property type="project" value="TreeGrafter"/>
</dbReference>
<dbReference type="GO" id="GO:0004096">
    <property type="term" value="F:catalase activity"/>
    <property type="evidence" value="ECO:0007669"/>
    <property type="project" value="UniProtKB-UniRule"/>
</dbReference>
<dbReference type="GO" id="GO:0020037">
    <property type="term" value="F:heme binding"/>
    <property type="evidence" value="ECO:0007669"/>
    <property type="project" value="InterPro"/>
</dbReference>
<dbReference type="GO" id="GO:0046872">
    <property type="term" value="F:metal ion binding"/>
    <property type="evidence" value="ECO:0007669"/>
    <property type="project" value="UniProtKB-KW"/>
</dbReference>
<dbReference type="GO" id="GO:0070301">
    <property type="term" value="P:cellular response to hydrogen peroxide"/>
    <property type="evidence" value="ECO:0007669"/>
    <property type="project" value="TreeGrafter"/>
</dbReference>
<dbReference type="GO" id="GO:0042744">
    <property type="term" value="P:hydrogen peroxide catabolic process"/>
    <property type="evidence" value="ECO:0007669"/>
    <property type="project" value="UniProtKB-KW"/>
</dbReference>
<dbReference type="CDD" id="cd00649">
    <property type="entry name" value="catalase_peroxidase_1"/>
    <property type="match status" value="1"/>
</dbReference>
<dbReference type="CDD" id="cd08200">
    <property type="entry name" value="catalase_peroxidase_2"/>
    <property type="match status" value="1"/>
</dbReference>
<dbReference type="FunFam" id="1.10.420.10:FF:000002">
    <property type="entry name" value="Catalase-peroxidase"/>
    <property type="match status" value="1"/>
</dbReference>
<dbReference type="FunFam" id="1.10.420.10:FF:000004">
    <property type="entry name" value="Catalase-peroxidase"/>
    <property type="match status" value="1"/>
</dbReference>
<dbReference type="FunFam" id="1.10.520.10:FF:000002">
    <property type="entry name" value="Catalase-peroxidase"/>
    <property type="match status" value="1"/>
</dbReference>
<dbReference type="FunFam" id="1.10.520.10:FF:000004">
    <property type="entry name" value="Catalase-peroxidase"/>
    <property type="match status" value="1"/>
</dbReference>
<dbReference type="Gene3D" id="1.10.520.10">
    <property type="match status" value="2"/>
</dbReference>
<dbReference type="Gene3D" id="1.10.420.10">
    <property type="entry name" value="Peroxidase, domain 2"/>
    <property type="match status" value="2"/>
</dbReference>
<dbReference type="HAMAP" id="MF_01961">
    <property type="entry name" value="Catal_peroxid"/>
    <property type="match status" value="1"/>
</dbReference>
<dbReference type="InterPro" id="IPR000763">
    <property type="entry name" value="Catalase_peroxidase"/>
</dbReference>
<dbReference type="InterPro" id="IPR002016">
    <property type="entry name" value="Haem_peroxidase"/>
</dbReference>
<dbReference type="InterPro" id="IPR010255">
    <property type="entry name" value="Haem_peroxidase_sf"/>
</dbReference>
<dbReference type="InterPro" id="IPR019794">
    <property type="entry name" value="Peroxidases_AS"/>
</dbReference>
<dbReference type="InterPro" id="IPR019793">
    <property type="entry name" value="Peroxidases_heam-ligand_BS"/>
</dbReference>
<dbReference type="NCBIfam" id="TIGR00198">
    <property type="entry name" value="cat_per_HPI"/>
    <property type="match status" value="1"/>
</dbReference>
<dbReference type="NCBIfam" id="NF011635">
    <property type="entry name" value="PRK15061.1"/>
    <property type="match status" value="1"/>
</dbReference>
<dbReference type="PANTHER" id="PTHR30555:SF0">
    <property type="entry name" value="CATALASE-PEROXIDASE"/>
    <property type="match status" value="1"/>
</dbReference>
<dbReference type="PANTHER" id="PTHR30555">
    <property type="entry name" value="HYDROPEROXIDASE I, BIFUNCTIONAL CATALASE-PEROXIDASE"/>
    <property type="match status" value="1"/>
</dbReference>
<dbReference type="Pfam" id="PF00141">
    <property type="entry name" value="peroxidase"/>
    <property type="match status" value="2"/>
</dbReference>
<dbReference type="PRINTS" id="PR00460">
    <property type="entry name" value="BPEROXIDASE"/>
</dbReference>
<dbReference type="PRINTS" id="PR00458">
    <property type="entry name" value="PEROXIDASE"/>
</dbReference>
<dbReference type="SUPFAM" id="SSF48113">
    <property type="entry name" value="Heme-dependent peroxidases"/>
    <property type="match status" value="2"/>
</dbReference>
<dbReference type="PROSITE" id="PS00435">
    <property type="entry name" value="PEROXIDASE_1"/>
    <property type="match status" value="1"/>
</dbReference>
<dbReference type="PROSITE" id="PS00436">
    <property type="entry name" value="PEROXIDASE_2"/>
    <property type="match status" value="1"/>
</dbReference>
<dbReference type="PROSITE" id="PS50873">
    <property type="entry name" value="PEROXIDASE_4"/>
    <property type="match status" value="1"/>
</dbReference>
<comment type="function">
    <text evidence="1">Bifunctional enzyme with both catalase and broad-spectrum peroxidase activity.</text>
</comment>
<comment type="catalytic activity">
    <reaction evidence="1">
        <text>H2O2 + AH2 = A + 2 H2O</text>
        <dbReference type="Rhea" id="RHEA:30275"/>
        <dbReference type="ChEBI" id="CHEBI:13193"/>
        <dbReference type="ChEBI" id="CHEBI:15377"/>
        <dbReference type="ChEBI" id="CHEBI:16240"/>
        <dbReference type="ChEBI" id="CHEBI:17499"/>
        <dbReference type="EC" id="1.11.1.21"/>
    </reaction>
</comment>
<comment type="catalytic activity">
    <reaction evidence="1">
        <text>2 H2O2 = O2 + 2 H2O</text>
        <dbReference type="Rhea" id="RHEA:20309"/>
        <dbReference type="ChEBI" id="CHEBI:15377"/>
        <dbReference type="ChEBI" id="CHEBI:15379"/>
        <dbReference type="ChEBI" id="CHEBI:16240"/>
        <dbReference type="EC" id="1.11.1.21"/>
    </reaction>
</comment>
<comment type="cofactor">
    <cofactor evidence="1">
        <name>heme b</name>
        <dbReference type="ChEBI" id="CHEBI:60344"/>
    </cofactor>
    <text evidence="1">Binds 1 heme b (iron(II)-protoporphyrin IX) group per dimer.</text>
</comment>
<comment type="subunit">
    <text evidence="1">Homodimer or homotetramer.</text>
</comment>
<comment type="PTM">
    <text evidence="1">Formation of the three residue Trp-Tyr-Met cross-link is important for the catalase, but not the peroxidase activity of the enzyme.</text>
</comment>
<comment type="similarity">
    <text evidence="1">Belongs to the peroxidase family. Peroxidase/catalase subfamily.</text>
</comment>
<feature type="chain" id="PRO_0000354731" description="Catalase-peroxidase 1">
    <location>
        <begin position="1"/>
        <end position="728"/>
    </location>
</feature>
<feature type="active site" description="Proton acceptor" evidence="1">
    <location>
        <position position="92"/>
    </location>
</feature>
<feature type="binding site" description="axial binding residue" evidence="1">
    <location>
        <position position="259"/>
    </location>
    <ligand>
        <name>heme b</name>
        <dbReference type="ChEBI" id="CHEBI:60344"/>
    </ligand>
    <ligandPart>
        <name>Fe</name>
        <dbReference type="ChEBI" id="CHEBI:18248"/>
    </ligandPart>
</feature>
<feature type="site" description="Transition state stabilizer" evidence="1">
    <location>
        <position position="88"/>
    </location>
</feature>
<feature type="cross-link" description="Tryptophyl-tyrosyl-methioninium (Trp-Tyr) (with M-244)" evidence="1">
    <location>
        <begin position="91"/>
        <end position="218"/>
    </location>
</feature>
<feature type="cross-link" description="Tryptophyl-tyrosyl-methioninium (Tyr-Met) (with W-91)" evidence="1">
    <location>
        <begin position="218"/>
        <end position="244"/>
    </location>
</feature>